<reference key="1">
    <citation type="journal article" date="2009" name="J. Bacteriol.">
        <title>Complete genome sequence and comparative genome analysis of enteropathogenic Escherichia coli O127:H6 strain E2348/69.</title>
        <authorList>
            <person name="Iguchi A."/>
            <person name="Thomson N.R."/>
            <person name="Ogura Y."/>
            <person name="Saunders D."/>
            <person name="Ooka T."/>
            <person name="Henderson I.R."/>
            <person name="Harris D."/>
            <person name="Asadulghani M."/>
            <person name="Kurokawa K."/>
            <person name="Dean P."/>
            <person name="Kenny B."/>
            <person name="Quail M.A."/>
            <person name="Thurston S."/>
            <person name="Dougan G."/>
            <person name="Hayashi T."/>
            <person name="Parkhill J."/>
            <person name="Frankel G."/>
        </authorList>
    </citation>
    <scope>NUCLEOTIDE SEQUENCE [LARGE SCALE GENOMIC DNA]</scope>
    <source>
        <strain>E2348/69 / EPEC</strain>
    </source>
</reference>
<feature type="chain" id="PRO_1000166721" description="Large ribosomal subunit protein bL21">
    <location>
        <begin position="1"/>
        <end position="103"/>
    </location>
</feature>
<evidence type="ECO:0000255" key="1">
    <source>
        <dbReference type="HAMAP-Rule" id="MF_01363"/>
    </source>
</evidence>
<evidence type="ECO:0000305" key="2"/>
<gene>
    <name evidence="1" type="primary">rplU</name>
    <name type="ordered locus">E2348C_3465</name>
</gene>
<dbReference type="EMBL" id="FM180568">
    <property type="protein sequence ID" value="CAS11013.1"/>
    <property type="molecule type" value="Genomic_DNA"/>
</dbReference>
<dbReference type="RefSeq" id="WP_000271401.1">
    <property type="nucleotide sequence ID" value="NC_011601.1"/>
</dbReference>
<dbReference type="SMR" id="B7UJ79"/>
<dbReference type="GeneID" id="93778795"/>
<dbReference type="KEGG" id="ecg:E2348C_3465"/>
<dbReference type="HOGENOM" id="CLU_061463_3_3_6"/>
<dbReference type="Proteomes" id="UP000008205">
    <property type="component" value="Chromosome"/>
</dbReference>
<dbReference type="GO" id="GO:0005737">
    <property type="term" value="C:cytoplasm"/>
    <property type="evidence" value="ECO:0007669"/>
    <property type="project" value="UniProtKB-ARBA"/>
</dbReference>
<dbReference type="GO" id="GO:1990904">
    <property type="term" value="C:ribonucleoprotein complex"/>
    <property type="evidence" value="ECO:0007669"/>
    <property type="project" value="UniProtKB-KW"/>
</dbReference>
<dbReference type="GO" id="GO:0005840">
    <property type="term" value="C:ribosome"/>
    <property type="evidence" value="ECO:0007669"/>
    <property type="project" value="UniProtKB-KW"/>
</dbReference>
<dbReference type="GO" id="GO:0019843">
    <property type="term" value="F:rRNA binding"/>
    <property type="evidence" value="ECO:0007669"/>
    <property type="project" value="UniProtKB-UniRule"/>
</dbReference>
<dbReference type="GO" id="GO:0003735">
    <property type="term" value="F:structural constituent of ribosome"/>
    <property type="evidence" value="ECO:0007669"/>
    <property type="project" value="InterPro"/>
</dbReference>
<dbReference type="GO" id="GO:0006412">
    <property type="term" value="P:translation"/>
    <property type="evidence" value="ECO:0007669"/>
    <property type="project" value="UniProtKB-UniRule"/>
</dbReference>
<dbReference type="HAMAP" id="MF_01363">
    <property type="entry name" value="Ribosomal_bL21"/>
    <property type="match status" value="1"/>
</dbReference>
<dbReference type="InterPro" id="IPR028909">
    <property type="entry name" value="bL21-like"/>
</dbReference>
<dbReference type="InterPro" id="IPR036164">
    <property type="entry name" value="bL21-like_sf"/>
</dbReference>
<dbReference type="InterPro" id="IPR001787">
    <property type="entry name" value="Ribosomal_bL21"/>
</dbReference>
<dbReference type="InterPro" id="IPR018258">
    <property type="entry name" value="Ribosomal_bL21_CS"/>
</dbReference>
<dbReference type="NCBIfam" id="TIGR00061">
    <property type="entry name" value="L21"/>
    <property type="match status" value="1"/>
</dbReference>
<dbReference type="PANTHER" id="PTHR21349">
    <property type="entry name" value="50S RIBOSOMAL PROTEIN L21"/>
    <property type="match status" value="1"/>
</dbReference>
<dbReference type="PANTHER" id="PTHR21349:SF0">
    <property type="entry name" value="LARGE RIBOSOMAL SUBUNIT PROTEIN BL21M"/>
    <property type="match status" value="1"/>
</dbReference>
<dbReference type="Pfam" id="PF00829">
    <property type="entry name" value="Ribosomal_L21p"/>
    <property type="match status" value="1"/>
</dbReference>
<dbReference type="SUPFAM" id="SSF141091">
    <property type="entry name" value="L21p-like"/>
    <property type="match status" value="1"/>
</dbReference>
<dbReference type="PROSITE" id="PS01169">
    <property type="entry name" value="RIBOSOMAL_L21"/>
    <property type="match status" value="1"/>
</dbReference>
<sequence>MYAVFQSGGKQHRVSEGQTVRLEKLDIATGETVEFAEVLMIANGEEVKIGVPFVDGGVIKAEVVAHGRGEKVKIVKFRRRKHYRKQQGHRQWFTDVKITGISA</sequence>
<proteinExistence type="inferred from homology"/>
<name>RL21_ECO27</name>
<organism>
    <name type="scientific">Escherichia coli O127:H6 (strain E2348/69 / EPEC)</name>
    <dbReference type="NCBI Taxonomy" id="574521"/>
    <lineage>
        <taxon>Bacteria</taxon>
        <taxon>Pseudomonadati</taxon>
        <taxon>Pseudomonadota</taxon>
        <taxon>Gammaproteobacteria</taxon>
        <taxon>Enterobacterales</taxon>
        <taxon>Enterobacteriaceae</taxon>
        <taxon>Escherichia</taxon>
    </lineage>
</organism>
<accession>B7UJ79</accession>
<protein>
    <recommendedName>
        <fullName evidence="1">Large ribosomal subunit protein bL21</fullName>
    </recommendedName>
    <alternativeName>
        <fullName evidence="2">50S ribosomal protein L21</fullName>
    </alternativeName>
</protein>
<comment type="function">
    <text evidence="1">This protein binds to 23S rRNA in the presence of protein L20.</text>
</comment>
<comment type="subunit">
    <text evidence="1">Part of the 50S ribosomal subunit. Contacts protein L20.</text>
</comment>
<comment type="similarity">
    <text evidence="1">Belongs to the bacterial ribosomal protein bL21 family.</text>
</comment>
<keyword id="KW-1185">Reference proteome</keyword>
<keyword id="KW-0687">Ribonucleoprotein</keyword>
<keyword id="KW-0689">Ribosomal protein</keyword>
<keyword id="KW-0694">RNA-binding</keyword>
<keyword id="KW-0699">rRNA-binding</keyword>